<comment type="function">
    <text>Probable ion channel inhibitor.</text>
</comment>
<comment type="subcellular location">
    <subcellularLocation>
        <location>Secreted</location>
    </subcellularLocation>
</comment>
<comment type="tissue specificity">
    <text>Expressed by the venom gland.</text>
</comment>
<comment type="domain">
    <text evidence="1">The presence of a 'disulfide through disulfide knot' structurally defines this protein as a knottin.</text>
</comment>
<comment type="mass spectrometry" mass="3604.5" method="MALDI" evidence="3">
    <text>Monoisotopic mass.</text>
</comment>
<comment type="miscellaneous">
    <text>Several genes are coding for U1-theraphotoxin-Cg1a for which the structure by NMR has been determined. The cross-references to PDB can be found in entry JZT7A_CHIJI (AC P0C2X7).</text>
</comment>
<comment type="similarity">
    <text evidence="5">Belongs to the neurotoxin 10 (Hwtx-1) family. 46 (Jztx-7/10/12) subfamily.</text>
</comment>
<protein>
    <recommendedName>
        <fullName>U1-theraphotoxin-Cg1a 2</fullName>
        <shortName>U1-TRTX-Cg1a</shortName>
    </recommendedName>
    <alternativeName>
        <fullName>Jingzhaotoxin-7.2</fullName>
        <shortName>JZTX-7.2</shortName>
    </alternativeName>
    <alternativeName>
        <fullName>Jingzhaotoxin-VII.2</fullName>
        <shortName>JZTX-VII.2</shortName>
    </alternativeName>
    <alternativeName>
        <fullName>Peptide F5-16.20</fullName>
    </alternativeName>
</protein>
<sequence length="66" mass="7171">MKTSALFVIFGLVLLFCNSFAAELEMTGRGCGGLMAGCDGKSTFCCSGYNCSPTWKWCVYARPGRR</sequence>
<proteinExistence type="evidence at protein level"/>
<keyword id="KW-0027">Amidation</keyword>
<keyword id="KW-0903">Direct protein sequencing</keyword>
<keyword id="KW-1015">Disulfide bond</keyword>
<keyword id="KW-0872">Ion channel impairing toxin</keyword>
<keyword id="KW-0960">Knottin</keyword>
<keyword id="KW-0964">Secreted</keyword>
<keyword id="KW-0732">Signal</keyword>
<keyword id="KW-0800">Toxin</keyword>
<feature type="signal peptide" evidence="2">
    <location>
        <begin position="1"/>
        <end position="21"/>
    </location>
</feature>
<feature type="propeptide" id="PRO_0000398398" evidence="1">
    <location>
        <begin position="22"/>
        <end position="29"/>
    </location>
</feature>
<feature type="peptide" id="PRO_0000398399" description="U1-theraphotoxin-Cg1a 2">
    <location>
        <begin position="30"/>
        <end position="63"/>
    </location>
</feature>
<feature type="modified residue" description="Proline amide" evidence="3">
    <location>
        <position position="63"/>
    </location>
</feature>
<feature type="disulfide bond" evidence="4">
    <location>
        <begin position="31"/>
        <end position="46"/>
    </location>
</feature>
<feature type="disulfide bond" evidence="4">
    <location>
        <begin position="38"/>
        <end position="51"/>
    </location>
</feature>
<feature type="disulfide bond" evidence="4">
    <location>
        <begin position="45"/>
        <end position="58"/>
    </location>
</feature>
<accession>B1P1A4</accession>
<organism>
    <name type="scientific">Chilobrachys guangxiensis</name>
    <name type="common">Chinese earth tiger tarantula</name>
    <name type="synonym">Chilobrachys jingzhao</name>
    <dbReference type="NCBI Taxonomy" id="278060"/>
    <lineage>
        <taxon>Eukaryota</taxon>
        <taxon>Metazoa</taxon>
        <taxon>Ecdysozoa</taxon>
        <taxon>Arthropoda</taxon>
        <taxon>Chelicerata</taxon>
        <taxon>Arachnida</taxon>
        <taxon>Araneae</taxon>
        <taxon>Mygalomorphae</taxon>
        <taxon>Theraphosidae</taxon>
        <taxon>Chilobrachys</taxon>
    </lineage>
</organism>
<evidence type="ECO:0000250" key="1"/>
<evidence type="ECO:0000255" key="2"/>
<evidence type="ECO:0000269" key="3">
    <source>
    </source>
</evidence>
<evidence type="ECO:0000269" key="4">
    <source ref="3"/>
</evidence>
<evidence type="ECO:0000305" key="5"/>
<dbReference type="EMBL" id="EU233835">
    <property type="protein sequence ID" value="ABY71654.1"/>
    <property type="molecule type" value="mRNA"/>
</dbReference>
<dbReference type="SMR" id="B1P1A4"/>
<dbReference type="ArachnoServer" id="AS000048">
    <property type="toxin name" value="U1-theraphotoxin-Cg1a"/>
</dbReference>
<dbReference type="GO" id="GO:0005576">
    <property type="term" value="C:extracellular region"/>
    <property type="evidence" value="ECO:0007669"/>
    <property type="project" value="UniProtKB-SubCell"/>
</dbReference>
<dbReference type="GO" id="GO:0008200">
    <property type="term" value="F:ion channel inhibitor activity"/>
    <property type="evidence" value="ECO:0007669"/>
    <property type="project" value="InterPro"/>
</dbReference>
<dbReference type="GO" id="GO:0090729">
    <property type="term" value="F:toxin activity"/>
    <property type="evidence" value="ECO:0007669"/>
    <property type="project" value="UniProtKB-KW"/>
</dbReference>
<dbReference type="InterPro" id="IPR011696">
    <property type="entry name" value="Huwentoxin-1"/>
</dbReference>
<dbReference type="InterPro" id="IPR013140">
    <property type="entry name" value="Huwentoxin_CS1"/>
</dbReference>
<dbReference type="Pfam" id="PF07740">
    <property type="entry name" value="Toxin_12"/>
    <property type="match status" value="1"/>
</dbReference>
<dbReference type="SUPFAM" id="SSF57059">
    <property type="entry name" value="omega toxin-like"/>
    <property type="match status" value="1"/>
</dbReference>
<dbReference type="PROSITE" id="PS60021">
    <property type="entry name" value="HWTX_1"/>
    <property type="match status" value="1"/>
</dbReference>
<reference key="1">
    <citation type="journal article" date="2008" name="Cell. Mol. Life Sci.">
        <title>Molecular diversity and evolution of cystine knot toxins of the tarantula Chilobrachys jingzhao.</title>
        <authorList>
            <person name="Chen J."/>
            <person name="Deng M."/>
            <person name="He Q."/>
            <person name="Meng E."/>
            <person name="Jiang L."/>
            <person name="Liao Z."/>
            <person name="Rong M."/>
            <person name="Liang S."/>
        </authorList>
    </citation>
    <scope>NUCLEOTIDE SEQUENCE [LARGE SCALE MRNA]</scope>
    <source>
        <tissue>Venom gland</tissue>
    </source>
</reference>
<reference key="2">
    <citation type="journal article" date="2007" name="Proteomics">
        <title>Proteomic and peptidomic analysis of the venom from Chinese tarantula Chilobrachys jingzhao.</title>
        <authorList>
            <person name="Liao Z."/>
            <person name="Cao J."/>
            <person name="Li S."/>
            <person name="Yan X."/>
            <person name="Hu W."/>
            <person name="He Q."/>
            <person name="Chen J."/>
            <person name="Tang J."/>
            <person name="Xie J."/>
            <person name="Liang S."/>
        </authorList>
    </citation>
    <scope>PROTEIN SEQUENCE OF 30-63</scope>
    <scope>MASS SPECTROMETRY</scope>
    <scope>AMIDATION AT PRO-63</scope>
    <source>
        <tissue>Venom</tissue>
    </source>
</reference>
<reference key="3">
    <citation type="submission" date="2005-08" db="PDB data bank">
        <title>Solution structure of jingzhaotoxin-VII.</title>
        <authorList>
            <person name="Liao Z."/>
            <person name="Liang S.P."/>
        </authorList>
    </citation>
    <scope>PROTEIN SEQUENCE OF 30-63</scope>
    <scope>STRUCTURE BY NMR OF 30-63</scope>
    <scope>DISULFIDE BONDS</scope>
</reference>
<name>JZT7B_CHIGU</name>